<feature type="chain" id="PRO_1000125168" description="Adenylate kinase">
    <location>
        <begin position="1"/>
        <end position="212"/>
    </location>
</feature>
<feature type="region of interest" description="NMP" evidence="1">
    <location>
        <begin position="30"/>
        <end position="59"/>
    </location>
</feature>
<feature type="region of interest" description="LID" evidence="1">
    <location>
        <begin position="127"/>
        <end position="159"/>
    </location>
</feature>
<feature type="binding site" evidence="1">
    <location>
        <begin position="10"/>
        <end position="15"/>
    </location>
    <ligand>
        <name>ATP</name>
        <dbReference type="ChEBI" id="CHEBI:30616"/>
    </ligand>
</feature>
<feature type="binding site" evidence="1">
    <location>
        <position position="31"/>
    </location>
    <ligand>
        <name>AMP</name>
        <dbReference type="ChEBI" id="CHEBI:456215"/>
    </ligand>
</feature>
<feature type="binding site" evidence="1">
    <location>
        <position position="36"/>
    </location>
    <ligand>
        <name>AMP</name>
        <dbReference type="ChEBI" id="CHEBI:456215"/>
    </ligand>
</feature>
<feature type="binding site" evidence="1">
    <location>
        <begin position="57"/>
        <end position="59"/>
    </location>
    <ligand>
        <name>AMP</name>
        <dbReference type="ChEBI" id="CHEBI:456215"/>
    </ligand>
</feature>
<feature type="binding site" evidence="1">
    <location>
        <begin position="86"/>
        <end position="89"/>
    </location>
    <ligand>
        <name>AMP</name>
        <dbReference type="ChEBI" id="CHEBI:456215"/>
    </ligand>
</feature>
<feature type="binding site" evidence="1">
    <location>
        <position position="93"/>
    </location>
    <ligand>
        <name>AMP</name>
        <dbReference type="ChEBI" id="CHEBI:456215"/>
    </ligand>
</feature>
<feature type="binding site" evidence="1">
    <location>
        <position position="128"/>
    </location>
    <ligand>
        <name>ATP</name>
        <dbReference type="ChEBI" id="CHEBI:30616"/>
    </ligand>
</feature>
<feature type="binding site" evidence="1">
    <location>
        <begin position="137"/>
        <end position="138"/>
    </location>
    <ligand>
        <name>ATP</name>
        <dbReference type="ChEBI" id="CHEBI:30616"/>
    </ligand>
</feature>
<feature type="binding site" evidence="1">
    <location>
        <position position="156"/>
    </location>
    <ligand>
        <name>AMP</name>
        <dbReference type="ChEBI" id="CHEBI:456215"/>
    </ligand>
</feature>
<feature type="binding site" evidence="1">
    <location>
        <position position="167"/>
    </location>
    <ligand>
        <name>AMP</name>
        <dbReference type="ChEBI" id="CHEBI:456215"/>
    </ligand>
</feature>
<feature type="binding site" evidence="1">
    <location>
        <position position="195"/>
    </location>
    <ligand>
        <name>ATP</name>
        <dbReference type="ChEBI" id="CHEBI:30616"/>
    </ligand>
</feature>
<sequence length="212" mass="23721">MNLLIMGLPGAGKGTQAAKIVEQFHVAHISTGDMFRAAMANQTEMGVLAKSYIDKGELVPDEVTNGIVKERLSQDDIKETGFLLDGYPRTIEQAHALDKTLAELGIELEGIINIEVNPDSLLERLSGRIIHRVTGETFHKVFNPPVDYKEEDYYQREDDKPETVKRRLDVNIAQGEPIIAHYRAKGLVHDIEGNQDINDVFSDIEKVLTNLK</sequence>
<keyword id="KW-0067">ATP-binding</keyword>
<keyword id="KW-0963">Cytoplasm</keyword>
<keyword id="KW-0418">Kinase</keyword>
<keyword id="KW-0545">Nucleotide biosynthesis</keyword>
<keyword id="KW-0547">Nucleotide-binding</keyword>
<keyword id="KW-0808">Transferase</keyword>
<reference key="1">
    <citation type="journal article" date="2010" name="Genome Biol.">
        <title>Structure and dynamics of the pan-genome of Streptococcus pneumoniae and closely related species.</title>
        <authorList>
            <person name="Donati C."/>
            <person name="Hiller N.L."/>
            <person name="Tettelin H."/>
            <person name="Muzzi A."/>
            <person name="Croucher N.J."/>
            <person name="Angiuoli S.V."/>
            <person name="Oggioni M."/>
            <person name="Dunning Hotopp J.C."/>
            <person name="Hu F.Z."/>
            <person name="Riley D.R."/>
            <person name="Covacci A."/>
            <person name="Mitchell T.J."/>
            <person name="Bentley S.D."/>
            <person name="Kilian M."/>
            <person name="Ehrlich G.D."/>
            <person name="Rappuoli R."/>
            <person name="Moxon E.R."/>
            <person name="Masignani V."/>
        </authorList>
    </citation>
    <scope>NUCLEOTIDE SEQUENCE [LARGE SCALE GENOMIC DNA]</scope>
    <source>
        <strain>Taiwan19F-14</strain>
    </source>
</reference>
<proteinExistence type="inferred from homology"/>
<gene>
    <name evidence="1" type="primary">adk</name>
    <name type="ordered locus">SPT_0277</name>
</gene>
<evidence type="ECO:0000255" key="1">
    <source>
        <dbReference type="HAMAP-Rule" id="MF_00235"/>
    </source>
</evidence>
<dbReference type="EC" id="2.7.4.3" evidence="1"/>
<dbReference type="EMBL" id="CP000921">
    <property type="protein sequence ID" value="ACO23352.1"/>
    <property type="molecule type" value="Genomic_DNA"/>
</dbReference>
<dbReference type="RefSeq" id="WP_001050431.1">
    <property type="nucleotide sequence ID" value="NC_012469.1"/>
</dbReference>
<dbReference type="SMR" id="C1CPA9"/>
<dbReference type="KEGG" id="snt:SPT_0277"/>
<dbReference type="HOGENOM" id="CLU_032354_1_2_9"/>
<dbReference type="UniPathway" id="UPA00588">
    <property type="reaction ID" value="UER00649"/>
</dbReference>
<dbReference type="GO" id="GO:0005737">
    <property type="term" value="C:cytoplasm"/>
    <property type="evidence" value="ECO:0007669"/>
    <property type="project" value="UniProtKB-SubCell"/>
</dbReference>
<dbReference type="GO" id="GO:0004017">
    <property type="term" value="F:adenylate kinase activity"/>
    <property type="evidence" value="ECO:0007669"/>
    <property type="project" value="UniProtKB-UniRule"/>
</dbReference>
<dbReference type="GO" id="GO:0005524">
    <property type="term" value="F:ATP binding"/>
    <property type="evidence" value="ECO:0007669"/>
    <property type="project" value="UniProtKB-UniRule"/>
</dbReference>
<dbReference type="GO" id="GO:0044209">
    <property type="term" value="P:AMP salvage"/>
    <property type="evidence" value="ECO:0007669"/>
    <property type="project" value="UniProtKB-UniRule"/>
</dbReference>
<dbReference type="CDD" id="cd01428">
    <property type="entry name" value="ADK"/>
    <property type="match status" value="1"/>
</dbReference>
<dbReference type="FunFam" id="3.40.50.300:FF:000106">
    <property type="entry name" value="Adenylate kinase mitochondrial"/>
    <property type="match status" value="1"/>
</dbReference>
<dbReference type="Gene3D" id="3.40.50.300">
    <property type="entry name" value="P-loop containing nucleotide triphosphate hydrolases"/>
    <property type="match status" value="1"/>
</dbReference>
<dbReference type="HAMAP" id="MF_00235">
    <property type="entry name" value="Adenylate_kinase_Adk"/>
    <property type="match status" value="1"/>
</dbReference>
<dbReference type="InterPro" id="IPR006259">
    <property type="entry name" value="Adenyl_kin_sub"/>
</dbReference>
<dbReference type="InterPro" id="IPR000850">
    <property type="entry name" value="Adenylat/UMP-CMP_kin"/>
</dbReference>
<dbReference type="InterPro" id="IPR033690">
    <property type="entry name" value="Adenylat_kinase_CS"/>
</dbReference>
<dbReference type="InterPro" id="IPR027417">
    <property type="entry name" value="P-loop_NTPase"/>
</dbReference>
<dbReference type="NCBIfam" id="TIGR01351">
    <property type="entry name" value="adk"/>
    <property type="match status" value="1"/>
</dbReference>
<dbReference type="NCBIfam" id="NF001380">
    <property type="entry name" value="PRK00279.1-2"/>
    <property type="match status" value="1"/>
</dbReference>
<dbReference type="NCBIfam" id="NF001381">
    <property type="entry name" value="PRK00279.1-3"/>
    <property type="match status" value="1"/>
</dbReference>
<dbReference type="NCBIfam" id="NF001382">
    <property type="entry name" value="PRK00279.1-4"/>
    <property type="match status" value="1"/>
</dbReference>
<dbReference type="NCBIfam" id="NF011100">
    <property type="entry name" value="PRK14527.1"/>
    <property type="match status" value="1"/>
</dbReference>
<dbReference type="PANTHER" id="PTHR23359">
    <property type="entry name" value="NUCLEOTIDE KINASE"/>
    <property type="match status" value="1"/>
</dbReference>
<dbReference type="Pfam" id="PF00406">
    <property type="entry name" value="ADK"/>
    <property type="match status" value="1"/>
</dbReference>
<dbReference type="PRINTS" id="PR00094">
    <property type="entry name" value="ADENYLTKNASE"/>
</dbReference>
<dbReference type="SUPFAM" id="SSF52540">
    <property type="entry name" value="P-loop containing nucleoside triphosphate hydrolases"/>
    <property type="match status" value="1"/>
</dbReference>
<dbReference type="PROSITE" id="PS00113">
    <property type="entry name" value="ADENYLATE_KINASE"/>
    <property type="match status" value="1"/>
</dbReference>
<organism>
    <name type="scientific">Streptococcus pneumoniae (strain Taiwan19F-14)</name>
    <dbReference type="NCBI Taxonomy" id="487213"/>
    <lineage>
        <taxon>Bacteria</taxon>
        <taxon>Bacillati</taxon>
        <taxon>Bacillota</taxon>
        <taxon>Bacilli</taxon>
        <taxon>Lactobacillales</taxon>
        <taxon>Streptococcaceae</taxon>
        <taxon>Streptococcus</taxon>
    </lineage>
</organism>
<name>KAD_STRZT</name>
<protein>
    <recommendedName>
        <fullName evidence="1">Adenylate kinase</fullName>
        <shortName evidence="1">AK</shortName>
        <ecNumber evidence="1">2.7.4.3</ecNumber>
    </recommendedName>
    <alternativeName>
        <fullName evidence="1">ATP-AMP transphosphorylase</fullName>
    </alternativeName>
    <alternativeName>
        <fullName evidence="1">ATP:AMP phosphotransferase</fullName>
    </alternativeName>
    <alternativeName>
        <fullName evidence="1">Adenylate monophosphate kinase</fullName>
    </alternativeName>
</protein>
<accession>C1CPA9</accession>
<comment type="function">
    <text evidence="1">Catalyzes the reversible transfer of the terminal phosphate group between ATP and AMP. Plays an important role in cellular energy homeostasis and in adenine nucleotide metabolism.</text>
</comment>
<comment type="catalytic activity">
    <reaction evidence="1">
        <text>AMP + ATP = 2 ADP</text>
        <dbReference type="Rhea" id="RHEA:12973"/>
        <dbReference type="ChEBI" id="CHEBI:30616"/>
        <dbReference type="ChEBI" id="CHEBI:456215"/>
        <dbReference type="ChEBI" id="CHEBI:456216"/>
        <dbReference type="EC" id="2.7.4.3"/>
    </reaction>
</comment>
<comment type="pathway">
    <text evidence="1">Purine metabolism; AMP biosynthesis via salvage pathway; AMP from ADP: step 1/1.</text>
</comment>
<comment type="subunit">
    <text evidence="1">Monomer.</text>
</comment>
<comment type="subcellular location">
    <subcellularLocation>
        <location evidence="1">Cytoplasm</location>
    </subcellularLocation>
</comment>
<comment type="domain">
    <text evidence="1">Consists of three domains, a large central CORE domain and two small peripheral domains, NMPbind and LID, which undergo movements during catalysis. The LID domain closes over the site of phosphoryl transfer upon ATP binding. Assembling and dissambling the active center during each catalytic cycle provides an effective means to prevent ATP hydrolysis.</text>
</comment>
<comment type="similarity">
    <text evidence="1">Belongs to the adenylate kinase family.</text>
</comment>